<dbReference type="EC" id="2.4.1.227" evidence="1"/>
<dbReference type="EMBL" id="AL123456">
    <property type="protein sequence ID" value="CCP44929.1"/>
    <property type="molecule type" value="Genomic_DNA"/>
</dbReference>
<dbReference type="PIR" id="E70579">
    <property type="entry name" value="E70579"/>
</dbReference>
<dbReference type="RefSeq" id="NP_216669.1">
    <property type="nucleotide sequence ID" value="NC_000962.3"/>
</dbReference>
<dbReference type="RefSeq" id="WP_003899190.1">
    <property type="nucleotide sequence ID" value="NZ_NVQJ01000044.1"/>
</dbReference>
<dbReference type="SMR" id="P9WJK9"/>
<dbReference type="FunCoup" id="P9WJK9">
    <property type="interactions" value="78"/>
</dbReference>
<dbReference type="STRING" id="83332.Rv2153c"/>
<dbReference type="PaxDb" id="83332-Rv2153c"/>
<dbReference type="DNASU" id="888036"/>
<dbReference type="GeneID" id="888036"/>
<dbReference type="KEGG" id="mtu:Rv2153c"/>
<dbReference type="KEGG" id="mtv:RVBD_2153c"/>
<dbReference type="TubercuList" id="Rv2153c"/>
<dbReference type="eggNOG" id="COG0707">
    <property type="taxonomic scope" value="Bacteria"/>
</dbReference>
<dbReference type="InParanoid" id="P9WJK9"/>
<dbReference type="OrthoDB" id="9808936at2"/>
<dbReference type="PhylomeDB" id="P9WJK9"/>
<dbReference type="BioCyc" id="MetaCyc:G185E-6361-MONOMER"/>
<dbReference type="UniPathway" id="UPA00219"/>
<dbReference type="Proteomes" id="UP000001584">
    <property type="component" value="Chromosome"/>
</dbReference>
<dbReference type="GO" id="GO:0005886">
    <property type="term" value="C:plasma membrane"/>
    <property type="evidence" value="ECO:0007669"/>
    <property type="project" value="UniProtKB-SubCell"/>
</dbReference>
<dbReference type="GO" id="GO:0016757">
    <property type="term" value="F:glycosyltransferase activity"/>
    <property type="evidence" value="ECO:0000318"/>
    <property type="project" value="GO_Central"/>
</dbReference>
<dbReference type="GO" id="GO:0051991">
    <property type="term" value="F:UDP-N-acetyl-D-glucosamine:N-acetylmuramoyl-L-alanyl-D-glutamyl-meso-2,6-diaminopimelyl-D-alanyl-D-alanine-diphosphoundecaprenol 4-beta-N-acetylglucosaminlytransferase activity"/>
    <property type="evidence" value="ECO:0007669"/>
    <property type="project" value="RHEA"/>
</dbReference>
<dbReference type="GO" id="GO:0050511">
    <property type="term" value="F:undecaprenyldiphospho-muramoylpentapeptide beta-N-acetylglucosaminyltransferase activity"/>
    <property type="evidence" value="ECO:0007669"/>
    <property type="project" value="UniProtKB-UniRule"/>
</dbReference>
<dbReference type="GO" id="GO:0005975">
    <property type="term" value="P:carbohydrate metabolic process"/>
    <property type="evidence" value="ECO:0007669"/>
    <property type="project" value="InterPro"/>
</dbReference>
<dbReference type="GO" id="GO:0051301">
    <property type="term" value="P:cell division"/>
    <property type="evidence" value="ECO:0007669"/>
    <property type="project" value="UniProtKB-KW"/>
</dbReference>
<dbReference type="GO" id="GO:0071555">
    <property type="term" value="P:cell wall organization"/>
    <property type="evidence" value="ECO:0007669"/>
    <property type="project" value="UniProtKB-KW"/>
</dbReference>
<dbReference type="GO" id="GO:0030259">
    <property type="term" value="P:lipid glycosylation"/>
    <property type="evidence" value="ECO:0007669"/>
    <property type="project" value="UniProtKB-UniRule"/>
</dbReference>
<dbReference type="GO" id="GO:0009252">
    <property type="term" value="P:peptidoglycan biosynthetic process"/>
    <property type="evidence" value="ECO:0007669"/>
    <property type="project" value="UniProtKB-UniRule"/>
</dbReference>
<dbReference type="GO" id="GO:0008360">
    <property type="term" value="P:regulation of cell shape"/>
    <property type="evidence" value="ECO:0007669"/>
    <property type="project" value="UniProtKB-KW"/>
</dbReference>
<dbReference type="CDD" id="cd03785">
    <property type="entry name" value="GT28_MurG"/>
    <property type="match status" value="1"/>
</dbReference>
<dbReference type="Gene3D" id="3.40.50.2000">
    <property type="entry name" value="Glycogen Phosphorylase B"/>
    <property type="match status" value="2"/>
</dbReference>
<dbReference type="HAMAP" id="MF_00033">
    <property type="entry name" value="MurG"/>
    <property type="match status" value="1"/>
</dbReference>
<dbReference type="InterPro" id="IPR006009">
    <property type="entry name" value="GlcNAc_MurG"/>
</dbReference>
<dbReference type="InterPro" id="IPR007235">
    <property type="entry name" value="Glyco_trans_28_C"/>
</dbReference>
<dbReference type="InterPro" id="IPR004276">
    <property type="entry name" value="GlycoTrans_28_N"/>
</dbReference>
<dbReference type="NCBIfam" id="TIGR01133">
    <property type="entry name" value="murG"/>
    <property type="match status" value="1"/>
</dbReference>
<dbReference type="PANTHER" id="PTHR21015:SF22">
    <property type="entry name" value="GLYCOSYLTRANSFERASE"/>
    <property type="match status" value="1"/>
</dbReference>
<dbReference type="PANTHER" id="PTHR21015">
    <property type="entry name" value="UDP-N-ACETYLGLUCOSAMINE--N-ACETYLMURAMYL-(PENTAPEPTIDE) PYROPHOSPHORYL-UNDECAPRENOL N-ACETYLGLUCOSAMINE TRANSFERASE 1"/>
    <property type="match status" value="1"/>
</dbReference>
<dbReference type="Pfam" id="PF04101">
    <property type="entry name" value="Glyco_tran_28_C"/>
    <property type="match status" value="1"/>
</dbReference>
<dbReference type="Pfam" id="PF03033">
    <property type="entry name" value="Glyco_transf_28"/>
    <property type="match status" value="1"/>
</dbReference>
<dbReference type="SUPFAM" id="SSF53756">
    <property type="entry name" value="UDP-Glycosyltransferase/glycogen phosphorylase"/>
    <property type="match status" value="1"/>
</dbReference>
<protein>
    <recommendedName>
        <fullName evidence="1">UDP-N-acetylglucosamine--N-acetylmuramyl-(pentapeptide) pyrophosphoryl-undecaprenol N-acetylglucosamine transferase</fullName>
        <ecNumber evidence="1">2.4.1.227</ecNumber>
    </recommendedName>
    <alternativeName>
        <fullName evidence="1">Undecaprenyl-PP-MurNAc-pentapeptide-UDPGlcNAc GlcNAc transferase</fullName>
    </alternativeName>
</protein>
<keyword id="KW-0131">Cell cycle</keyword>
<keyword id="KW-0132">Cell division</keyword>
<keyword id="KW-1003">Cell membrane</keyword>
<keyword id="KW-0133">Cell shape</keyword>
<keyword id="KW-0961">Cell wall biogenesis/degradation</keyword>
<keyword id="KW-0328">Glycosyltransferase</keyword>
<keyword id="KW-0472">Membrane</keyword>
<keyword id="KW-0573">Peptidoglycan synthesis</keyword>
<keyword id="KW-1185">Reference proteome</keyword>
<keyword id="KW-0808">Transferase</keyword>
<accession>P9WJK9</accession>
<accession>L0T8S3</accession>
<accession>O06224</accession>
<reference key="1">
    <citation type="journal article" date="1998" name="Nature">
        <title>Deciphering the biology of Mycobacterium tuberculosis from the complete genome sequence.</title>
        <authorList>
            <person name="Cole S.T."/>
            <person name="Brosch R."/>
            <person name="Parkhill J."/>
            <person name="Garnier T."/>
            <person name="Churcher C.M."/>
            <person name="Harris D.E."/>
            <person name="Gordon S.V."/>
            <person name="Eiglmeier K."/>
            <person name="Gas S."/>
            <person name="Barry C.E. III"/>
            <person name="Tekaia F."/>
            <person name="Badcock K."/>
            <person name="Basham D."/>
            <person name="Brown D."/>
            <person name="Chillingworth T."/>
            <person name="Connor R."/>
            <person name="Davies R.M."/>
            <person name="Devlin K."/>
            <person name="Feltwell T."/>
            <person name="Gentles S."/>
            <person name="Hamlin N."/>
            <person name="Holroyd S."/>
            <person name="Hornsby T."/>
            <person name="Jagels K."/>
            <person name="Krogh A."/>
            <person name="McLean J."/>
            <person name="Moule S."/>
            <person name="Murphy L.D."/>
            <person name="Oliver S."/>
            <person name="Osborne J."/>
            <person name="Quail M.A."/>
            <person name="Rajandream M.A."/>
            <person name="Rogers J."/>
            <person name="Rutter S."/>
            <person name="Seeger K."/>
            <person name="Skelton S."/>
            <person name="Squares S."/>
            <person name="Squares R."/>
            <person name="Sulston J.E."/>
            <person name="Taylor K."/>
            <person name="Whitehead S."/>
            <person name="Barrell B.G."/>
        </authorList>
    </citation>
    <scope>NUCLEOTIDE SEQUENCE [LARGE SCALE GENOMIC DNA]</scope>
    <source>
        <strain>ATCC 25618 / H37Rv</strain>
    </source>
</reference>
<reference key="2">
    <citation type="journal article" date="2008" name="BMC Syst. Biol.">
        <title>targetTB: a target identification pipeline for Mycobacterium tuberculosis through an interactome, reactome and genome-scale structural analysis.</title>
        <authorList>
            <person name="Raman K."/>
            <person name="Yeturu K."/>
            <person name="Chandra N."/>
        </authorList>
    </citation>
    <scope>IDENTIFICATION AS A DRUG TARGET [LARGE SCALE ANALYSIS]</scope>
</reference>
<reference key="3">
    <citation type="journal article" date="2011" name="Mol. Cell. Proteomics">
        <title>Proteogenomic analysis of Mycobacterium tuberculosis by high resolution mass spectrometry.</title>
        <authorList>
            <person name="Kelkar D.S."/>
            <person name="Kumar D."/>
            <person name="Kumar P."/>
            <person name="Balakrishnan L."/>
            <person name="Muthusamy B."/>
            <person name="Yadav A.K."/>
            <person name="Shrivastava P."/>
            <person name="Marimuthu A."/>
            <person name="Anand S."/>
            <person name="Sundaram H."/>
            <person name="Kingsbury R."/>
            <person name="Harsha H.C."/>
            <person name="Nair B."/>
            <person name="Prasad T.S."/>
            <person name="Chauhan D.S."/>
            <person name="Katoch K."/>
            <person name="Katoch V.M."/>
            <person name="Kumar P."/>
            <person name="Chaerkady R."/>
            <person name="Ramachandran S."/>
            <person name="Dash D."/>
            <person name="Pandey A."/>
        </authorList>
    </citation>
    <scope>IDENTIFICATION BY MASS SPECTROMETRY [LARGE SCALE ANALYSIS]</scope>
    <source>
        <strain>ATCC 25618 / H37Rv</strain>
    </source>
</reference>
<sequence>MKDTVSQPAGGRGATAPRPADAASPSCGSSPSADSVSVVLAGGGTAGHVEPAMAVADALVALDPRVRITALGTLRGLETRLVPQRGYHLELITAVPMPRKPGGDLARLPSRVWRAVREARDVLDDVDADVVVGFGGYVALPAYLAARGLPLPPRRRRRIPVVIHEANARAGLANRVGAHTADRVLSAVPDSGLRRAEVVGVPVRASIAALDRAVLRAEARAHFGFPDDARVLLVFGGSQGAVSLNRAVSGAAADLAAAGVCVLHAHGPQNVLELRRRAQGDPPYVAVPYLDRMELAYAAADLVICRAGAMTVAEVSAVGLPAIYVPLPIGNGEQRLNALPVVNAGGGMVVADAALTPELVARQVAGLLTDPARLAAMTAAAARVGHRDAAGQVARAALAVATGAGARTTT</sequence>
<feature type="chain" id="PRO_0000109189" description="UDP-N-acetylglucosamine--N-acetylmuramyl-(pentapeptide) pyrophosphoryl-undecaprenol N-acetylglucosamine transferase">
    <location>
        <begin position="1"/>
        <end position="410"/>
    </location>
</feature>
<feature type="region of interest" description="Disordered" evidence="2">
    <location>
        <begin position="1"/>
        <end position="35"/>
    </location>
</feature>
<feature type="compositionally biased region" description="Low complexity" evidence="2">
    <location>
        <begin position="14"/>
        <end position="35"/>
    </location>
</feature>
<feature type="binding site" evidence="1">
    <location>
        <begin position="45"/>
        <end position="47"/>
    </location>
    <ligand>
        <name>UDP-N-acetyl-alpha-D-glucosamine</name>
        <dbReference type="ChEBI" id="CHEBI:57705"/>
    </ligand>
</feature>
<feature type="binding site" evidence="1">
    <location>
        <position position="167"/>
    </location>
    <ligand>
        <name>UDP-N-acetyl-alpha-D-glucosamine</name>
        <dbReference type="ChEBI" id="CHEBI:57705"/>
    </ligand>
</feature>
<feature type="binding site" evidence="1">
    <location>
        <position position="204"/>
    </location>
    <ligand>
        <name>UDP-N-acetyl-alpha-D-glucosamine</name>
        <dbReference type="ChEBI" id="CHEBI:57705"/>
    </ligand>
</feature>
<feature type="binding site" evidence="1">
    <location>
        <position position="238"/>
    </location>
    <ligand>
        <name>UDP-N-acetyl-alpha-D-glucosamine</name>
        <dbReference type="ChEBI" id="CHEBI:57705"/>
    </ligand>
</feature>
<feature type="binding site" evidence="1">
    <location>
        <position position="334"/>
    </location>
    <ligand>
        <name>UDP-N-acetyl-alpha-D-glucosamine</name>
        <dbReference type="ChEBI" id="CHEBI:57705"/>
    </ligand>
</feature>
<organism>
    <name type="scientific">Mycobacterium tuberculosis (strain ATCC 25618 / H37Rv)</name>
    <dbReference type="NCBI Taxonomy" id="83332"/>
    <lineage>
        <taxon>Bacteria</taxon>
        <taxon>Bacillati</taxon>
        <taxon>Actinomycetota</taxon>
        <taxon>Actinomycetes</taxon>
        <taxon>Mycobacteriales</taxon>
        <taxon>Mycobacteriaceae</taxon>
        <taxon>Mycobacterium</taxon>
        <taxon>Mycobacterium tuberculosis complex</taxon>
    </lineage>
</organism>
<evidence type="ECO:0000255" key="1">
    <source>
        <dbReference type="HAMAP-Rule" id="MF_00033"/>
    </source>
</evidence>
<evidence type="ECO:0000256" key="2">
    <source>
        <dbReference type="SAM" id="MobiDB-lite"/>
    </source>
</evidence>
<gene>
    <name evidence="1" type="primary">murG</name>
    <name type="ordered locus">Rv2153c</name>
    <name type="ORF">MTCY270.15</name>
</gene>
<name>MURG_MYCTU</name>
<comment type="function">
    <text evidence="1">Cell wall formation. Catalyzes the transfer of a GlcNAc subunit on undecaprenyl-pyrophosphoryl-MurNAc-pentapeptide (lipid intermediate I) to form undecaprenyl-pyrophosphoryl-MurNAc-(pentapeptide)GlcNAc (lipid intermediate II).</text>
</comment>
<comment type="catalytic activity">
    <reaction evidence="1">
        <text>di-trans,octa-cis-undecaprenyl diphospho-N-acetyl-alpha-D-muramoyl-L-alanyl-D-glutamyl-meso-2,6-diaminopimeloyl-D-alanyl-D-alanine + UDP-N-acetyl-alpha-D-glucosamine = di-trans,octa-cis-undecaprenyl diphospho-[N-acetyl-alpha-D-glucosaminyl-(1-&gt;4)]-N-acetyl-alpha-D-muramoyl-L-alanyl-D-glutamyl-meso-2,6-diaminopimeloyl-D-alanyl-D-alanine + UDP + H(+)</text>
        <dbReference type="Rhea" id="RHEA:31227"/>
        <dbReference type="ChEBI" id="CHEBI:15378"/>
        <dbReference type="ChEBI" id="CHEBI:57705"/>
        <dbReference type="ChEBI" id="CHEBI:58223"/>
        <dbReference type="ChEBI" id="CHEBI:61387"/>
        <dbReference type="ChEBI" id="CHEBI:61388"/>
        <dbReference type="EC" id="2.4.1.227"/>
    </reaction>
</comment>
<comment type="pathway">
    <text evidence="1">Cell wall biogenesis; peptidoglycan biosynthesis.</text>
</comment>
<comment type="subcellular location">
    <subcellularLocation>
        <location evidence="1">Cell membrane</location>
        <topology evidence="1">Peripheral membrane protein</topology>
        <orientation evidence="1">Cytoplasmic side</orientation>
    </subcellularLocation>
</comment>
<comment type="miscellaneous">
    <text>Was identified as a high-confidence drug target.</text>
</comment>
<comment type="similarity">
    <text evidence="1">Belongs to the glycosyltransferase 28 family. MurG subfamily.</text>
</comment>
<proteinExistence type="evidence at protein level"/>